<organism>
    <name type="scientific">Theobroma cacao</name>
    <name type="common">Cacao</name>
    <name type="synonym">Cocoa</name>
    <dbReference type="NCBI Taxonomy" id="3641"/>
    <lineage>
        <taxon>Eukaryota</taxon>
        <taxon>Viridiplantae</taxon>
        <taxon>Streptophyta</taxon>
        <taxon>Embryophyta</taxon>
        <taxon>Tracheophyta</taxon>
        <taxon>Spermatophyta</taxon>
        <taxon>Magnoliopsida</taxon>
        <taxon>eudicotyledons</taxon>
        <taxon>Gunneridae</taxon>
        <taxon>Pentapetalae</taxon>
        <taxon>rosids</taxon>
        <taxon>malvids</taxon>
        <taxon>Malvales</taxon>
        <taxon>Malvaceae</taxon>
        <taxon>Byttnerioideae</taxon>
        <taxon>Theobroma</taxon>
    </lineage>
</organism>
<gene>
    <name evidence="9" type="ORF">TCM_034091</name>
</gene>
<proteinExistence type="inferred from homology"/>
<name>JMT2_THECC</name>
<dbReference type="EC" id="2.1.1.141" evidence="4"/>
<dbReference type="EMBL" id="CM001886">
    <property type="protein sequence ID" value="EOY14825.1"/>
    <property type="molecule type" value="Genomic_DNA"/>
</dbReference>
<dbReference type="SMR" id="A0A061FBW2"/>
<dbReference type="FunCoup" id="A0A061FBW2">
    <property type="interactions" value="67"/>
</dbReference>
<dbReference type="STRING" id="3641.A0A061FBW2"/>
<dbReference type="EnsemblPlants" id="EOY14825">
    <property type="protein sequence ID" value="EOY14825"/>
    <property type="gene ID" value="TCM_034091"/>
</dbReference>
<dbReference type="Gramene" id="EOY14825">
    <property type="protein sequence ID" value="EOY14825"/>
    <property type="gene ID" value="TCM_034091"/>
</dbReference>
<dbReference type="eggNOG" id="ENOG502QQYU">
    <property type="taxonomic scope" value="Eukaryota"/>
</dbReference>
<dbReference type="HOGENOM" id="CLU_019628_2_0_1"/>
<dbReference type="InParanoid" id="A0A061FBW2"/>
<dbReference type="OMA" id="HFGKDIM"/>
<dbReference type="UniPathway" id="UPA00382"/>
<dbReference type="Proteomes" id="UP000026915">
    <property type="component" value="Chromosome 8"/>
</dbReference>
<dbReference type="Proteomes" id="UP000694886">
    <property type="component" value="Unplaced"/>
</dbReference>
<dbReference type="GO" id="GO:0005737">
    <property type="term" value="C:cytoplasm"/>
    <property type="evidence" value="ECO:0007669"/>
    <property type="project" value="UniProtKB-SubCell"/>
</dbReference>
<dbReference type="GO" id="GO:0005634">
    <property type="term" value="C:nucleus"/>
    <property type="evidence" value="ECO:0007669"/>
    <property type="project" value="UniProtKB-SubCell"/>
</dbReference>
<dbReference type="GO" id="GO:0046872">
    <property type="term" value="F:metal ion binding"/>
    <property type="evidence" value="ECO:0007669"/>
    <property type="project" value="UniProtKB-KW"/>
</dbReference>
<dbReference type="GO" id="GO:0030795">
    <property type="term" value="F:methyl jasmonate methylesterase activity"/>
    <property type="evidence" value="ECO:0007669"/>
    <property type="project" value="UniProtKB-EC"/>
</dbReference>
<dbReference type="GO" id="GO:0008757">
    <property type="term" value="F:S-adenosylmethionine-dependent methyltransferase activity"/>
    <property type="evidence" value="ECO:0000318"/>
    <property type="project" value="GO_Central"/>
</dbReference>
<dbReference type="GO" id="GO:0032259">
    <property type="term" value="P:methylation"/>
    <property type="evidence" value="ECO:0000318"/>
    <property type="project" value="GO_Central"/>
</dbReference>
<dbReference type="GO" id="GO:0031408">
    <property type="term" value="P:oxylipin biosynthetic process"/>
    <property type="evidence" value="ECO:0007669"/>
    <property type="project" value="UniProtKB-UniPathway"/>
</dbReference>
<dbReference type="Gene3D" id="1.10.1200.270">
    <property type="entry name" value="Methyltransferase, alpha-helical capping domain"/>
    <property type="match status" value="1"/>
</dbReference>
<dbReference type="Gene3D" id="3.40.50.150">
    <property type="entry name" value="Vaccinia Virus protein VP39"/>
    <property type="match status" value="1"/>
</dbReference>
<dbReference type="InterPro" id="IPR005299">
    <property type="entry name" value="MeTrfase_7"/>
</dbReference>
<dbReference type="InterPro" id="IPR042086">
    <property type="entry name" value="MeTrfase_capping"/>
</dbReference>
<dbReference type="InterPro" id="IPR029063">
    <property type="entry name" value="SAM-dependent_MTases_sf"/>
</dbReference>
<dbReference type="PANTHER" id="PTHR31009">
    <property type="entry name" value="S-ADENOSYL-L-METHIONINE:CARBOXYL METHYLTRANSFERASE FAMILY PROTEIN"/>
    <property type="match status" value="1"/>
</dbReference>
<dbReference type="Pfam" id="PF03492">
    <property type="entry name" value="Methyltransf_7"/>
    <property type="match status" value="1"/>
</dbReference>
<dbReference type="SUPFAM" id="SSF53335">
    <property type="entry name" value="S-adenosyl-L-methionine-dependent methyltransferases"/>
    <property type="match status" value="1"/>
</dbReference>
<comment type="function">
    <text evidence="4">Catalyzes the methylation of jasmonate into methyljasmonate, a plant volatile that acts as an important cellular regulator mediating diverse developmental processes and defense responses.</text>
</comment>
<comment type="catalytic activity">
    <reaction evidence="4">
        <text>jasmonate + S-adenosyl-L-methionine = methyl (-)-jasmonate + S-adenosyl-L-homocysteine</text>
        <dbReference type="Rhea" id="RHEA:13349"/>
        <dbReference type="ChEBI" id="CHEBI:15929"/>
        <dbReference type="ChEBI" id="CHEBI:57856"/>
        <dbReference type="ChEBI" id="CHEBI:58431"/>
        <dbReference type="ChEBI" id="CHEBI:59789"/>
        <dbReference type="EC" id="2.1.1.141"/>
    </reaction>
</comment>
<comment type="cofactor">
    <cofactor evidence="5">
        <name>Mg(2+)</name>
        <dbReference type="ChEBI" id="CHEBI:18420"/>
    </cofactor>
    <text evidence="5">Binds 1 Mg(2+) ion per subunit.</text>
</comment>
<comment type="pathway">
    <text evidence="4">Lipid metabolism; oxylipin biosynthesis.</text>
</comment>
<comment type="subcellular location">
    <subcellularLocation>
        <location evidence="7">Cytoplasm</location>
    </subcellularLocation>
    <subcellularLocation>
        <location evidence="7">Nucleus</location>
    </subcellularLocation>
    <text evidence="7">Predominantly cytoplasmic (By similarity). Partially nuclear (By similarity).</text>
</comment>
<comment type="similarity">
    <text evidence="8">Belongs to the methyltransferase superfamily. Type-7 methyltransferase family.</text>
</comment>
<protein>
    <recommendedName>
        <fullName evidence="9">Probable jasmonic acid carboxyl methyltransferase 2</fullName>
        <ecNumber evidence="4">2.1.1.141</ecNumber>
    </recommendedName>
</protein>
<reference key="1">
    <citation type="journal article" date="2013" name="Genome Biol.">
        <title>The genome sequence of the most widely cultivated cacao type and its use to identify candidate genes regulating pod color.</title>
        <authorList>
            <person name="Motamayor J.C."/>
            <person name="Mockaitis K."/>
            <person name="Schmutz J."/>
            <person name="Haiminen N."/>
            <person name="Livingstone D. III"/>
            <person name="Cornejo O."/>
            <person name="Findley S.D."/>
            <person name="Zheng P."/>
            <person name="Utro F."/>
            <person name="Royaert S."/>
            <person name="Saski C."/>
            <person name="Jenkins J."/>
            <person name="Podicheti R."/>
            <person name="Zhao M."/>
            <person name="Scheffler B.E."/>
            <person name="Stack J.C."/>
            <person name="Feltus F.A."/>
            <person name="Mustiga G.M."/>
            <person name="Amores F."/>
            <person name="Phillips W."/>
            <person name="Marelli J.P."/>
            <person name="May G.D."/>
            <person name="Shapiro H."/>
            <person name="Ma J."/>
            <person name="Bustamante C.D."/>
            <person name="Schnell R.J."/>
            <person name="Main D."/>
            <person name="Gilbert D."/>
            <person name="Parida L."/>
            <person name="Kuhn D.N."/>
        </authorList>
    </citation>
    <scope>NUCLEOTIDE SEQUENCE [LARGE SCALE GENOMIC DNA]</scope>
    <source>
        <strain>cv. Matina 1-6</strain>
    </source>
</reference>
<accession>A0A061FBW2</accession>
<evidence type="ECO:0000250" key="1">
    <source>
        <dbReference type="UniProtKB" id="A0A6C0WW36"/>
    </source>
</evidence>
<evidence type="ECO:0000250" key="2">
    <source>
        <dbReference type="UniProtKB" id="B2KPR3"/>
    </source>
</evidence>
<evidence type="ECO:0000250" key="3">
    <source>
        <dbReference type="UniProtKB" id="Q2HXI6"/>
    </source>
</evidence>
<evidence type="ECO:0000250" key="4">
    <source>
        <dbReference type="UniProtKB" id="Q9AR07"/>
    </source>
</evidence>
<evidence type="ECO:0000250" key="5">
    <source>
        <dbReference type="UniProtKB" id="Q9FLN8"/>
    </source>
</evidence>
<evidence type="ECO:0000250" key="6">
    <source>
        <dbReference type="UniProtKB" id="Q9FZN8"/>
    </source>
</evidence>
<evidence type="ECO:0000250" key="7">
    <source>
        <dbReference type="UniProtKB" id="Q9SBK6"/>
    </source>
</evidence>
<evidence type="ECO:0000305" key="8"/>
<evidence type="ECO:0000312" key="9">
    <source>
        <dbReference type="EMBL" id="EOY14825.1"/>
    </source>
</evidence>
<feature type="chain" id="PRO_0000451778" description="Probable jasmonic acid carboxyl methyltransferase 2">
    <location>
        <begin position="1"/>
        <end position="373"/>
    </location>
</feature>
<feature type="binding site" evidence="2">
    <location>
        <position position="18"/>
    </location>
    <ligand>
        <name>S-adenosyl-L-homocysteine</name>
        <dbReference type="ChEBI" id="CHEBI:57856"/>
    </ligand>
</feature>
<feature type="binding site" evidence="2">
    <location>
        <position position="25"/>
    </location>
    <ligand>
        <name>jasmonate</name>
        <dbReference type="ChEBI" id="CHEBI:58431"/>
    </ligand>
</feature>
<feature type="binding site" evidence="2">
    <location>
        <position position="59"/>
    </location>
    <ligand>
        <name>S-adenosyl-L-homocysteine</name>
        <dbReference type="ChEBI" id="CHEBI:57856"/>
    </ligand>
</feature>
<feature type="binding site" evidence="2">
    <location>
        <position position="64"/>
    </location>
    <ligand>
        <name>S-adenosyl-L-homocysteine</name>
        <dbReference type="ChEBI" id="CHEBI:57856"/>
    </ligand>
</feature>
<feature type="binding site" evidence="2">
    <location>
        <position position="96"/>
    </location>
    <ligand>
        <name>S-adenosyl-L-homocysteine</name>
        <dbReference type="ChEBI" id="CHEBI:57856"/>
    </ligand>
</feature>
<feature type="binding site" evidence="1">
    <location>
        <position position="97"/>
    </location>
    <ligand>
        <name>S-adenosyl-L-homocysteine</name>
        <dbReference type="ChEBI" id="CHEBI:57856"/>
    </ligand>
</feature>
<feature type="binding site" evidence="2">
    <location>
        <position position="135"/>
    </location>
    <ligand>
        <name>S-adenosyl-L-homocysteine</name>
        <dbReference type="ChEBI" id="CHEBI:57856"/>
    </ligand>
</feature>
<feature type="binding site" evidence="2">
    <location>
        <position position="136"/>
    </location>
    <ligand>
        <name>S-adenosyl-L-homocysteine</name>
        <dbReference type="ChEBI" id="CHEBI:57856"/>
    </ligand>
</feature>
<feature type="binding site" evidence="2">
    <location>
        <position position="156"/>
    </location>
    <ligand>
        <name>jasmonate</name>
        <dbReference type="ChEBI" id="CHEBI:58431"/>
    </ligand>
</feature>
<feature type="binding site" evidence="2">
    <location>
        <position position="157"/>
    </location>
    <ligand>
        <name>jasmonate</name>
        <dbReference type="ChEBI" id="CHEBI:58431"/>
    </ligand>
</feature>
<feature type="binding site" evidence="5">
    <location>
        <position position="174"/>
    </location>
    <ligand>
        <name>Mg(2+)</name>
        <dbReference type="ChEBI" id="CHEBI:18420"/>
    </ligand>
</feature>
<feature type="binding site" evidence="5">
    <location>
        <position position="260"/>
    </location>
    <ligand>
        <name>Mg(2+)</name>
        <dbReference type="ChEBI" id="CHEBI:18420"/>
    </ligand>
</feature>
<feature type="binding site" evidence="5">
    <location>
        <position position="262"/>
    </location>
    <ligand>
        <name>Mg(2+)</name>
        <dbReference type="ChEBI" id="CHEBI:18420"/>
    </ligand>
</feature>
<feature type="binding site" evidence="5">
    <location>
        <position position="263"/>
    </location>
    <ligand>
        <name>Mg(2+)</name>
        <dbReference type="ChEBI" id="CHEBI:18420"/>
    </ligand>
</feature>
<feature type="site" description="Involved in substrate discrimination" evidence="6">
    <location>
        <position position="150"/>
    </location>
</feature>
<feature type="site" description="Involved in substrate discrimination" evidence="3">
    <location>
        <position position="222"/>
    </location>
</feature>
<keyword id="KW-0963">Cytoplasm</keyword>
<keyword id="KW-0460">Magnesium</keyword>
<keyword id="KW-0479">Metal-binding</keyword>
<keyword id="KW-0489">Methyltransferase</keyword>
<keyword id="KW-0539">Nucleus</keyword>
<keyword id="KW-1185">Reference proteome</keyword>
<keyword id="KW-0808">Transferase</keyword>
<sequence length="373" mass="41388">MEVMQVLHMNKGNGETSYAKNSTVQSKIISVGKPIIEEAVHEISCNNLLESMGIADLGCSSGPNTLSVISEIMDMVQTTSRRLGRPVPEFRVYLNDLYSNDFNYIFMSLPAFYHRLKEEKGIGCGSCYISGVAGSFYGRLFPSKSLHFVHSSSSLHWLSQVPPGLESKALAPLNKGKVYISKSSPQSVLNAYSLQFQNDFSMFIESRSQELVPGGRMVLSFMGRRSTDPTTEESCHHWELLAQAIMSLVREGLIEEAKVDSFNAPYYAPCAEEIKVEIQKVGSFVIDRLEGFEIDWDGGAVSDVQTAQGKLLIGQRVAKTIRAVVESMLESHFGIGQDIMDDLFSRYAEIVGNHLSKTRTKYINLVISLIKKG</sequence>